<gene>
    <name type="primary">SIW14</name>
    <name type="synonym">OCA3</name>
    <name evidence="16" type="ordered locus">YNL032W</name>
    <name type="ORF">N2746</name>
</gene>
<evidence type="ECO:0000250" key="1">
    <source>
        <dbReference type="UniProtKB" id="Q9ZVN4"/>
    </source>
</evidence>
<evidence type="ECO:0000255" key="2">
    <source>
        <dbReference type="PROSITE-ProRule" id="PRU00160"/>
    </source>
</evidence>
<evidence type="ECO:0000256" key="3">
    <source>
        <dbReference type="SAM" id="MobiDB-lite"/>
    </source>
</evidence>
<evidence type="ECO:0000269" key="4">
    <source>
    </source>
</evidence>
<evidence type="ECO:0000269" key="5">
    <source>
    </source>
</evidence>
<evidence type="ECO:0000269" key="6">
    <source>
    </source>
</evidence>
<evidence type="ECO:0000269" key="7">
    <source>
    </source>
</evidence>
<evidence type="ECO:0000269" key="8">
    <source>
    </source>
</evidence>
<evidence type="ECO:0000269" key="9">
    <source>
    </source>
</evidence>
<evidence type="ECO:0000269" key="10">
    <source>
    </source>
</evidence>
<evidence type="ECO:0000303" key="11">
    <source>
    </source>
</evidence>
<evidence type="ECO:0000303" key="12">
    <source>
    </source>
</evidence>
<evidence type="ECO:0000303" key="13">
    <source>
    </source>
</evidence>
<evidence type="ECO:0000305" key="14"/>
<evidence type="ECO:0000305" key="15">
    <source>
    </source>
</evidence>
<evidence type="ECO:0000312" key="16">
    <source>
        <dbReference type="SGD" id="S000004977"/>
    </source>
</evidence>
<evidence type="ECO:0007744" key="17">
    <source>
        <dbReference type="PDB" id="6BYF"/>
    </source>
</evidence>
<evidence type="ECO:0007744" key="18">
    <source>
        <dbReference type="PDB" id="6E3B"/>
    </source>
</evidence>
<evidence type="ECO:0007744" key="19">
    <source>
    </source>
</evidence>
<evidence type="ECO:0007744" key="20">
    <source>
    </source>
</evidence>
<evidence type="ECO:0007829" key="21">
    <source>
        <dbReference type="PDB" id="6BYF"/>
    </source>
</evidence>
<evidence type="ECO:0007829" key="22">
    <source>
        <dbReference type="PDB" id="6E3B"/>
    </source>
</evidence>
<reference key="1">
    <citation type="journal article" date="1997" name="Nature">
        <title>The nucleotide sequence of Saccharomyces cerevisiae chromosome XIV and its evolutionary implications.</title>
        <authorList>
            <person name="Philippsen P."/>
            <person name="Kleine K."/>
            <person name="Poehlmann R."/>
            <person name="Duesterhoeft A."/>
            <person name="Hamberg K."/>
            <person name="Hegemann J.H."/>
            <person name="Obermaier B."/>
            <person name="Urrestarazu L.A."/>
            <person name="Aert R."/>
            <person name="Albermann K."/>
            <person name="Altmann R."/>
            <person name="Andre B."/>
            <person name="Baladron V."/>
            <person name="Ballesta J.P.G."/>
            <person name="Becam A.-M."/>
            <person name="Beinhauer J.D."/>
            <person name="Boskovic J."/>
            <person name="Buitrago M.J."/>
            <person name="Bussereau F."/>
            <person name="Coster F."/>
            <person name="Crouzet M."/>
            <person name="D'Angelo M."/>
            <person name="Dal Pero F."/>
            <person name="De Antoni A."/>
            <person name="del Rey F."/>
            <person name="Doignon F."/>
            <person name="Domdey H."/>
            <person name="Dubois E."/>
            <person name="Fiedler T.A."/>
            <person name="Fleig U."/>
            <person name="Floeth M."/>
            <person name="Fritz C."/>
            <person name="Gaillardin C."/>
            <person name="Garcia-Cantalejo J.M."/>
            <person name="Glansdorff N."/>
            <person name="Goffeau A."/>
            <person name="Gueldener U."/>
            <person name="Herbert C.J."/>
            <person name="Heumann K."/>
            <person name="Heuss-Neitzel D."/>
            <person name="Hilbert H."/>
            <person name="Hinni K."/>
            <person name="Iraqui Houssaini I."/>
            <person name="Jacquet M."/>
            <person name="Jimenez A."/>
            <person name="Jonniaux J.-L."/>
            <person name="Karpfinger-Hartl L."/>
            <person name="Lanfranchi G."/>
            <person name="Lepingle A."/>
            <person name="Levesque H."/>
            <person name="Lyck R."/>
            <person name="Maftahi M."/>
            <person name="Mallet L."/>
            <person name="Maurer C.T.C."/>
            <person name="Messenguy F."/>
            <person name="Mewes H.-W."/>
            <person name="Moestl D."/>
            <person name="Nasr F."/>
            <person name="Nicaud J.-M."/>
            <person name="Niedenthal R.K."/>
            <person name="Pandolfo D."/>
            <person name="Pierard A."/>
            <person name="Piravandi E."/>
            <person name="Planta R.J."/>
            <person name="Pohl T.M."/>
            <person name="Purnelle B."/>
            <person name="Rebischung C."/>
            <person name="Remacha M.A."/>
            <person name="Revuelta J.L."/>
            <person name="Rinke M."/>
            <person name="Saiz J.E."/>
            <person name="Sartorello F."/>
            <person name="Scherens B."/>
            <person name="Sen-Gupta M."/>
            <person name="Soler-Mira A."/>
            <person name="Urbanus J.H.M."/>
            <person name="Valle G."/>
            <person name="Van Dyck L."/>
            <person name="Verhasselt P."/>
            <person name="Vierendeels F."/>
            <person name="Vissers S."/>
            <person name="Voet M."/>
            <person name="Volckaert G."/>
            <person name="Wach A."/>
            <person name="Wambutt R."/>
            <person name="Wedler H."/>
            <person name="Zollner A."/>
            <person name="Hani J."/>
        </authorList>
    </citation>
    <scope>NUCLEOTIDE SEQUENCE [LARGE SCALE GENOMIC DNA]</scope>
    <source>
        <strain>ATCC 204508 / S288c</strain>
    </source>
</reference>
<reference key="2">
    <citation type="journal article" date="2014" name="G3 (Bethesda)">
        <title>The reference genome sequence of Saccharomyces cerevisiae: Then and now.</title>
        <authorList>
            <person name="Engel S.R."/>
            <person name="Dietrich F.S."/>
            <person name="Fisk D.G."/>
            <person name="Binkley G."/>
            <person name="Balakrishnan R."/>
            <person name="Costanzo M.C."/>
            <person name="Dwight S.S."/>
            <person name="Hitz B.C."/>
            <person name="Karra K."/>
            <person name="Nash R.S."/>
            <person name="Weng S."/>
            <person name="Wong E.D."/>
            <person name="Lloyd P."/>
            <person name="Skrzypek M.S."/>
            <person name="Miyasato S.R."/>
            <person name="Simison M."/>
            <person name="Cherry J.M."/>
        </authorList>
    </citation>
    <scope>GENOME REANNOTATION</scope>
    <source>
        <strain>ATCC 204508 / S288c</strain>
    </source>
</reference>
<reference key="3">
    <citation type="journal article" date="2003" name="Nature">
        <title>Global analysis of protein localization in budding yeast.</title>
        <authorList>
            <person name="Huh W.-K."/>
            <person name="Falvo J.V."/>
            <person name="Gerke L.C."/>
            <person name="Carroll A.S."/>
            <person name="Howson R.W."/>
            <person name="Weissman J.S."/>
            <person name="O'Shea E.K."/>
        </authorList>
    </citation>
    <scope>SUBCELLULAR LOCATION [LARGE SCALE ANALYSIS]</scope>
</reference>
<reference key="4">
    <citation type="journal article" date="2003" name="Nature">
        <title>Global analysis of protein expression in yeast.</title>
        <authorList>
            <person name="Ghaemmaghami S."/>
            <person name="Huh W.-K."/>
            <person name="Bower K."/>
            <person name="Howson R.W."/>
            <person name="Belle A."/>
            <person name="Dephoure N."/>
            <person name="O'Shea E.K."/>
            <person name="Weissman J.S."/>
        </authorList>
    </citation>
    <scope>LEVEL OF PROTEIN EXPRESSION [LARGE SCALE ANALYSIS]</scope>
</reference>
<reference key="5">
    <citation type="journal article" date="2004" name="Genetics">
        <title>A synthetic lethal screen identifies a role for the cortical actin patch/endocytosis complex in the response to nutrient deprivation in Saccharomyces cerevisiae.</title>
        <authorList>
            <person name="Care A."/>
            <person name="Vousden K.A."/>
            <person name="Binley K.M."/>
            <person name="Radcliffe P."/>
            <person name="Trevethick J."/>
            <person name="Mannazzu I."/>
            <person name="Sudbery P.E."/>
        </authorList>
    </citation>
    <scope>FUNCTION</scope>
</reference>
<reference key="6">
    <citation type="journal article" date="2007" name="J. Proteome Res.">
        <title>Large-scale phosphorylation analysis of alpha-factor-arrested Saccharomyces cerevisiae.</title>
        <authorList>
            <person name="Li X."/>
            <person name="Gerber S.A."/>
            <person name="Rudner A.D."/>
            <person name="Beausoleil S.A."/>
            <person name="Haas W."/>
            <person name="Villen J."/>
            <person name="Elias J.E."/>
            <person name="Gygi S.P."/>
        </authorList>
    </citation>
    <scope>PHOSPHORYLATION [LARGE SCALE ANALYSIS] AT SER-94</scope>
    <scope>IDENTIFICATION BY MASS SPECTROMETRY [LARGE SCALE ANALYSIS]</scope>
    <source>
        <strain>ADR376</strain>
    </source>
</reference>
<reference key="7">
    <citation type="journal article" date="2009" name="Science">
        <title>Global analysis of Cdk1 substrate phosphorylation sites provides insights into evolution.</title>
        <authorList>
            <person name="Holt L.J."/>
            <person name="Tuch B.B."/>
            <person name="Villen J."/>
            <person name="Johnson A.D."/>
            <person name="Gygi S.P."/>
            <person name="Morgan D.O."/>
        </authorList>
    </citation>
    <scope>PHOSPHORYLATION [LARGE SCALE ANALYSIS] AT SER-94</scope>
    <scope>IDENTIFICATION BY MASS SPECTROMETRY [LARGE SCALE ANALYSIS]</scope>
</reference>
<reference key="8">
    <citation type="journal article" date="2011" name="Mol. Genet. Genomics">
        <title>Phylogenetic and genetic linkage between novel atypical dual-specificity phosphatases from non-metazoan organisms.</title>
        <authorList>
            <person name="Roma-Mateo C."/>
            <person name="Sacristan-Reviriego A."/>
            <person name="Beresford N.J."/>
            <person name="Caparros-Martin J.A."/>
            <person name="Culianez-Macia F.A."/>
            <person name="Martin H."/>
            <person name="Molina M."/>
            <person name="Tabernero L."/>
            <person name="Pulido R."/>
        </authorList>
    </citation>
    <scope>CATALYTIC ACTIVITY</scope>
</reference>
<reference key="9">
    <citation type="journal article" date="2016" name="J. Biol. Chem.">
        <title>A novel inositol pyrophosphate phosphatase in Saccharomyces cerevisiae: Siw14 protein selectively cleaves the beta-phosphate from 5-diphosphoinositol pentakisphosphate (5pp-ip5).</title>
        <authorList>
            <person name="Steidle E.A."/>
            <person name="Chong L.S."/>
            <person name="Wu M."/>
            <person name="Crooke E."/>
            <person name="Fiedler D."/>
            <person name="Resnick A.C."/>
            <person name="Rolfes R.J."/>
        </authorList>
    </citation>
    <scope>FUNCTION</scope>
    <scope>CATALYTIC ACTIVITY</scope>
    <scope>BIOPHYSICOCHEMICAL PROPERTIES</scope>
    <scope>MUTAGENESIS OF CYS-214</scope>
</reference>
<reference key="10">
    <citation type="journal article" date="2017" name="Proc. Natl. Acad. Sci. U.S.A.">
        <title>[PSI+] prion propagation is controlled by inositol polyphosphates.</title>
        <authorList>
            <person name="Wickner R.B."/>
            <person name="Kelly A.C."/>
            <person name="Bezsonov E.E."/>
            <person name="Edskes H.K."/>
        </authorList>
    </citation>
    <scope>FUNCTION IN PRION SUPPRESSION</scope>
</reference>
<reference key="11">
    <citation type="journal article" date="2022" name="Biochemistry">
        <title>Arabidopsis PFA-DSP-Type Phosphohydrolases Target Specific Inositol Pyrophosphate Messengers.</title>
        <authorList>
            <person name="Gaugler P."/>
            <person name="Schneider R."/>
            <person name="Liu G."/>
            <person name="Qiu D."/>
            <person name="Weber J."/>
            <person name="Schmid J."/>
            <person name="Jork N."/>
            <person name="Haener M."/>
            <person name="Ritter K."/>
            <person name="Fernandez-Rebollo N."/>
            <person name="Giehl R.F.H."/>
            <person name="Trung M.N."/>
            <person name="Yadav R."/>
            <person name="Fiedler D."/>
            <person name="Gaugler V."/>
            <person name="Jessen H.J."/>
            <person name="Schaaf G."/>
            <person name="Laha D."/>
        </authorList>
    </citation>
    <scope>FUNCTION</scope>
    <scope>CATALYTIC ACTIVITY</scope>
    <scope>DISRUPTION PHENOTYPE</scope>
    <scope>MUTAGENESIS OF CYS-214</scope>
</reference>
<reference evidence="17" key="12">
    <citation type="journal article" date="2018" name="J. Biol. Chem.">
        <title>Structural and biochemical characterization of Siw14: A protein-tyrosine phosphatase fold that metabolizes inositol pyrophosphates.</title>
        <authorList>
            <person name="Wang H."/>
            <person name="Gu C."/>
            <person name="Rolfes R.J."/>
            <person name="Jessen H.J."/>
            <person name="Shears S.B."/>
        </authorList>
    </citation>
    <scope>X-RAY CRYSTALLOGRAPHY (2.35 ANGSTROMS) OF 116-281</scope>
    <scope>SUBUNIT</scope>
    <scope>MUTAGENESIS OF CYS-214 AND ARG-220</scope>
</reference>
<reference evidence="18" key="13">
    <citation type="journal article" date="2019" name="Biochemistry">
        <title>Molecular architecture of the inositol phosphatase Siw14.</title>
        <authorList>
            <person name="Florio T.J."/>
            <person name="Lokareddy R.K."/>
            <person name="Gillilan R.E."/>
            <person name="Cingolani G."/>
        </authorList>
    </citation>
    <scope>X-RAY CRYSTALLOGRAPHY (2.50 ANGSTROMS) OF 113-281</scope>
</reference>
<dbReference type="EC" id="3.6.1.52" evidence="7 9 10"/>
<dbReference type="EMBL" id="Z71308">
    <property type="protein sequence ID" value="CAA95895.1"/>
    <property type="molecule type" value="Genomic_DNA"/>
</dbReference>
<dbReference type="EMBL" id="BK006947">
    <property type="protein sequence ID" value="DAA10513.1"/>
    <property type="molecule type" value="Genomic_DNA"/>
</dbReference>
<dbReference type="PIR" id="S62954">
    <property type="entry name" value="S62954"/>
</dbReference>
<dbReference type="RefSeq" id="NP_014366.3">
    <property type="nucleotide sequence ID" value="NM_001182871.3"/>
</dbReference>
<dbReference type="PDB" id="6BYF">
    <property type="method" value="X-ray"/>
    <property type="resolution" value="2.35 A"/>
    <property type="chains" value="A/B/C/D/E/F/G/H/I=116-281"/>
</dbReference>
<dbReference type="PDB" id="6E3B">
    <property type="method" value="X-ray"/>
    <property type="resolution" value="2.50 A"/>
    <property type="chains" value="A/B/C/D/E/F/G/H/I/J/K/L/M/N/O/P/Q/R/S/T/V/W/X/Y=113-281"/>
</dbReference>
<dbReference type="PDBsum" id="6BYF"/>
<dbReference type="PDBsum" id="6E3B"/>
<dbReference type="SMR" id="P53965"/>
<dbReference type="BioGRID" id="35795">
    <property type="interactions" value="457"/>
</dbReference>
<dbReference type="DIP" id="DIP-1990N"/>
<dbReference type="FunCoup" id="P53965">
    <property type="interactions" value="181"/>
</dbReference>
<dbReference type="IntAct" id="P53965">
    <property type="interactions" value="32"/>
</dbReference>
<dbReference type="MINT" id="P53965"/>
<dbReference type="STRING" id="4932.YNL032W"/>
<dbReference type="iPTMnet" id="P53965"/>
<dbReference type="PaxDb" id="4932-YNL032W"/>
<dbReference type="PeptideAtlas" id="P53965"/>
<dbReference type="EnsemblFungi" id="YNL032W_mRNA">
    <property type="protein sequence ID" value="YNL032W"/>
    <property type="gene ID" value="YNL032W"/>
</dbReference>
<dbReference type="GeneID" id="855699"/>
<dbReference type="KEGG" id="sce:YNL032W"/>
<dbReference type="AGR" id="SGD:S000004977"/>
<dbReference type="SGD" id="S000004977">
    <property type="gene designation" value="SIW14"/>
</dbReference>
<dbReference type="VEuPathDB" id="FungiDB:YNL032W"/>
<dbReference type="eggNOG" id="KOG1572">
    <property type="taxonomic scope" value="Eukaryota"/>
</dbReference>
<dbReference type="GeneTree" id="ENSGT00940000176301"/>
<dbReference type="HOGENOM" id="CLU_047845_1_0_1"/>
<dbReference type="InParanoid" id="P53965"/>
<dbReference type="OMA" id="RLEYENC"/>
<dbReference type="OrthoDB" id="6375174at2759"/>
<dbReference type="BioCyc" id="MetaCyc:G3O-33069-MONOMER"/>
<dbReference type="BioCyc" id="YEAST:G3O-33069-MONOMER"/>
<dbReference type="BRENDA" id="3.1.3.48">
    <property type="organism ID" value="984"/>
</dbReference>
<dbReference type="SABIO-RK" id="P53965"/>
<dbReference type="BioGRID-ORCS" id="855699">
    <property type="hits" value="0 hits in 10 CRISPR screens"/>
</dbReference>
<dbReference type="PRO" id="PR:P53965"/>
<dbReference type="Proteomes" id="UP000002311">
    <property type="component" value="Chromosome XIV"/>
</dbReference>
<dbReference type="RNAct" id="P53965">
    <property type="molecule type" value="protein"/>
</dbReference>
<dbReference type="GO" id="GO:0005737">
    <property type="term" value="C:cytoplasm"/>
    <property type="evidence" value="ECO:0007005"/>
    <property type="project" value="SGD"/>
</dbReference>
<dbReference type="GO" id="GO:0005829">
    <property type="term" value="C:cytosol"/>
    <property type="evidence" value="ECO:0007005"/>
    <property type="project" value="SGD"/>
</dbReference>
<dbReference type="GO" id="GO:0052840">
    <property type="term" value="F:inositol diphosphate tetrakisphosphate diphosphatase activity"/>
    <property type="evidence" value="ECO:0000318"/>
    <property type="project" value="GO_Central"/>
</dbReference>
<dbReference type="GO" id="GO:0052847">
    <property type="term" value="F:inositol-1,5-bisdiphosphate-2,3,4,6-tetrakisphosphate 5-diphosphatase activity"/>
    <property type="evidence" value="ECO:0000314"/>
    <property type="project" value="UniProtKB"/>
</dbReference>
<dbReference type="GO" id="GO:0052848">
    <property type="term" value="F:inositol-3,5-bisdiphosphate-2,3,4,6-tetrakisphosphate 5-diphosphatase activity"/>
    <property type="evidence" value="ECO:0007669"/>
    <property type="project" value="RHEA"/>
</dbReference>
<dbReference type="GO" id="GO:0052845">
    <property type="term" value="F:inositol-5-diphosphate-1,2,3,4,6-pentakisphosphate diphosphatase activity"/>
    <property type="evidence" value="ECO:0000314"/>
    <property type="project" value="UniProtKB"/>
</dbReference>
<dbReference type="GO" id="GO:0106211">
    <property type="term" value="F:inositol-5-diphosphate-1,3,4,6-tetrakisphosphate diphosphatase activity"/>
    <property type="evidence" value="ECO:0000314"/>
    <property type="project" value="SGD"/>
</dbReference>
<dbReference type="GO" id="GO:0016791">
    <property type="term" value="F:phosphatase activity"/>
    <property type="evidence" value="ECO:0000318"/>
    <property type="project" value="GO_Central"/>
</dbReference>
<dbReference type="GO" id="GO:0007015">
    <property type="term" value="P:actin filament organization"/>
    <property type="evidence" value="ECO:0000315"/>
    <property type="project" value="SGD"/>
</dbReference>
<dbReference type="GO" id="GO:0071543">
    <property type="term" value="P:diphosphoinositol polyphosphate metabolic process"/>
    <property type="evidence" value="ECO:0000315"/>
    <property type="project" value="SGD"/>
</dbReference>
<dbReference type="CDD" id="cd14528">
    <property type="entry name" value="PFA-DSP_Siw14"/>
    <property type="match status" value="1"/>
</dbReference>
<dbReference type="FunFam" id="3.90.190.10:FF:000024">
    <property type="entry name" value="probable tyrosine-protein phosphatase At1g05000"/>
    <property type="match status" value="1"/>
</dbReference>
<dbReference type="Gene3D" id="3.90.190.10">
    <property type="entry name" value="Protein tyrosine phosphatase superfamily"/>
    <property type="match status" value="1"/>
</dbReference>
<dbReference type="InterPro" id="IPR020428">
    <property type="entry name" value="PFA-DSPs"/>
</dbReference>
<dbReference type="InterPro" id="IPR029021">
    <property type="entry name" value="Prot-tyrosine_phosphatase-like"/>
</dbReference>
<dbReference type="InterPro" id="IPR004861">
    <property type="entry name" value="Siw14-like"/>
</dbReference>
<dbReference type="InterPro" id="IPR016130">
    <property type="entry name" value="Tyr_Pase_AS"/>
</dbReference>
<dbReference type="InterPro" id="IPR020422">
    <property type="entry name" value="TYR_PHOSPHATASE_DUAL_dom"/>
</dbReference>
<dbReference type="PANTHER" id="PTHR31126:SF48">
    <property type="entry name" value="INOSITOL PHOSPHATASE SIW14"/>
    <property type="match status" value="1"/>
</dbReference>
<dbReference type="PANTHER" id="PTHR31126">
    <property type="entry name" value="TYROSINE-PROTEIN PHOSPHATASE"/>
    <property type="match status" value="1"/>
</dbReference>
<dbReference type="Pfam" id="PF03162">
    <property type="entry name" value="Y_phosphatase2"/>
    <property type="match status" value="1"/>
</dbReference>
<dbReference type="PRINTS" id="PR01911">
    <property type="entry name" value="PFDSPHPHTASE"/>
</dbReference>
<dbReference type="SUPFAM" id="SSF52799">
    <property type="entry name" value="(Phosphotyrosine protein) phosphatases II"/>
    <property type="match status" value="1"/>
</dbReference>
<dbReference type="PROSITE" id="PS00383">
    <property type="entry name" value="TYR_PHOSPHATASE_1"/>
    <property type="match status" value="1"/>
</dbReference>
<dbReference type="PROSITE" id="PS50054">
    <property type="entry name" value="TYR_PHOSPHATASE_DUAL"/>
    <property type="match status" value="1"/>
</dbReference>
<comment type="function">
    <text evidence="6 7 8 9 10">Selectively cleaves the beta-phosphate at the 5-position of soluble inositol pyrophosphates. Converts 5-diphosphoinositol tetrakisphosphate (5-PP-InsP(4)) into inositol pentakisphosphate (InsP(5)), 5-diphosphoinositol pentakisphosphate (5-PP-IP(5) or 5-InsP(7)) into inositol hexakisphosphate (IP(6) or InsP(6)), and 1,5-bisdiphosphoinositol tetrakisphosphate (1,5-PP-IP(5) or InsP(8)) into 1-diphosphoinositol pentakisphosphate (1-PP-IP(5) or 1-InsP(7)) (PubMed:26828065, PubMed:29540476, PubMed:35640071). Also has activity on 1,5-bis-diphosphoinositol 2,3,4,6-tetrakisphosphate (1,5-InsP(8)) and 3,5-InsP(8) (PubMed:35640071). Modulates inositol pyrophosphate metabolism that may have an influence in stress response (PubMed:26828065). Plays a role in actin filament organization and endocytosis (PubMed:15020461). Functions as a prion suppressing factor possibly due to its phosphatase activity against inositol pyrophosphates, which are signal transduction molecules involved in prion propagation (PubMed:28923943).</text>
</comment>
<comment type="catalytic activity">
    <reaction evidence="7 9 10">
        <text>5-diphospho-1D-myo-inositol 1,2,3,4,6-pentakisphosphate + H2O = 1D-myo-inositol hexakisphosphate + phosphate + H(+)</text>
        <dbReference type="Rhea" id="RHEA:22384"/>
        <dbReference type="ChEBI" id="CHEBI:15377"/>
        <dbReference type="ChEBI" id="CHEBI:15378"/>
        <dbReference type="ChEBI" id="CHEBI:43474"/>
        <dbReference type="ChEBI" id="CHEBI:58130"/>
        <dbReference type="ChEBI" id="CHEBI:58628"/>
        <dbReference type="EC" id="3.6.1.52"/>
    </reaction>
    <physiologicalReaction direction="left-to-right" evidence="10">
        <dbReference type="Rhea" id="RHEA:22385"/>
    </physiologicalReaction>
</comment>
<comment type="catalytic activity">
    <reaction evidence="9">
        <text>5-diphospho-1D-myo-inositol 1,3,4,6-tetrakisphosphate + H2O = 1D-myo-inositol 1,3,4,5,6-pentakisphosphate + phosphate + H(+)</text>
        <dbReference type="Rhea" id="RHEA:59500"/>
        <dbReference type="ChEBI" id="CHEBI:15377"/>
        <dbReference type="ChEBI" id="CHEBI:15378"/>
        <dbReference type="ChEBI" id="CHEBI:43474"/>
        <dbReference type="ChEBI" id="CHEBI:57733"/>
        <dbReference type="ChEBI" id="CHEBI:142939"/>
        <dbReference type="EC" id="3.6.1.52"/>
    </reaction>
</comment>
<comment type="catalytic activity">
    <reaction evidence="9 10">
        <text>3,5-bis(diphospho)-1D-myo-inositol 1,2,4,6-tetrakisphosphate + H2O = 3-diphospho-1D-myo-inositol 1,2,4,5,6-pentakisphosphate + phosphate + 2 H(+)</text>
        <dbReference type="Rhea" id="RHEA:56312"/>
        <dbReference type="ChEBI" id="CHEBI:15377"/>
        <dbReference type="ChEBI" id="CHEBI:15378"/>
        <dbReference type="ChEBI" id="CHEBI:43474"/>
        <dbReference type="ChEBI" id="CHEBI:140372"/>
        <dbReference type="ChEBI" id="CHEBI:140374"/>
        <dbReference type="EC" id="3.6.1.52"/>
    </reaction>
    <physiologicalReaction direction="left-to-right" evidence="10">
        <dbReference type="Rhea" id="RHEA:56313"/>
    </physiologicalReaction>
</comment>
<comment type="catalytic activity">
    <reaction evidence="10">
        <text>1,5-bis(diphospho)-1D-myo-inositol 2,3,4,6-tetrakisphosphate + H2O = 1-diphospho-1D-myo-inositol 2,3,4,5,6-pentakisphosphate + phosphate + 2 H(+)</text>
        <dbReference type="Rhea" id="RHEA:79699"/>
        <dbReference type="ChEBI" id="CHEBI:15377"/>
        <dbReference type="ChEBI" id="CHEBI:15378"/>
        <dbReference type="ChEBI" id="CHEBI:43474"/>
        <dbReference type="ChEBI" id="CHEBI:74946"/>
        <dbReference type="ChEBI" id="CHEBI:77983"/>
        <dbReference type="EC" id="3.6.1.52"/>
    </reaction>
    <physiologicalReaction direction="left-to-right" evidence="10">
        <dbReference type="Rhea" id="RHEA:79700"/>
    </physiologicalReaction>
</comment>
<comment type="catalytic activity">
    <reaction evidence="10">
        <text>6-diphospho-1D-myo-inositol pentakisphosphate + H2O = 1D-myo-inositol hexakisphosphate + phosphate + H(+)</text>
        <dbReference type="Rhea" id="RHEA:79703"/>
        <dbReference type="ChEBI" id="CHEBI:15377"/>
        <dbReference type="ChEBI" id="CHEBI:15378"/>
        <dbReference type="ChEBI" id="CHEBI:43474"/>
        <dbReference type="ChEBI" id="CHEBI:58130"/>
        <dbReference type="ChEBI" id="CHEBI:230534"/>
        <dbReference type="EC" id="3.6.1.52"/>
    </reaction>
    <physiologicalReaction direction="left-to-right" evidence="10">
        <dbReference type="Rhea" id="RHEA:79704"/>
    </physiologicalReaction>
</comment>
<comment type="biophysicochemical properties">
    <kinetics>
        <KM evidence="7">34 uM for 5-diphosphoinositol pentakisphosphate</KM>
        <KM evidence="9">10.4 uM for 5-diphosphoinositol pentakisphosphate</KM>
        <KM evidence="9">56.8 uM for 5-diphosphoinositol tetrakisphosphate</KM>
        <KM evidence="9">10.1 uM for 1,5-bisdiphosphoinositol tetrakisphosphate</KM>
        <text evidence="7 9">kcat is 0.0025 sec(-1) with 5-diphosphoinositol pentakisphosphate as substrate (PubMed:26828065). kcat is 1.31 sec(-1) with 5-diphosphoinositol pentakisphosphate as substrate, 0.77 sec(-1) with 5-diphosphoinositol tetrakisphosphate as substrate, and 0.63 sec(-1) with 1,5-bisdiphosphoinositol tetrakisphosphate as substrate (PubMed:29540476).</text>
    </kinetics>
    <phDependence>
        <text evidence="7">Optimum pH is 6.</text>
    </phDependence>
    <temperatureDependence>
        <text evidence="7">Optimum temperature is 37 degrees Celsius.</text>
    </temperatureDependence>
</comment>
<comment type="subunit">
    <text evidence="9">Monomer.</text>
</comment>
<comment type="interaction">
    <interactant intactId="EBI-28668">
        <id>P53965</id>
    </interactant>
    <interactant intactId="EBI-28814">
        <id>P50946</id>
        <label>OCA1</label>
    </interactant>
    <organismsDiffer>false</organismsDiffer>
    <experiments>5</experiments>
</comment>
<comment type="interaction">
    <interactant intactId="EBI-28668">
        <id>P53965</id>
    </interactant>
    <interactant intactId="EBI-28725">
        <id>P53949</id>
        <label>OCA2</label>
    </interactant>
    <organismsDiffer>false</organismsDiffer>
    <experiments>4</experiments>
</comment>
<comment type="subcellular location">
    <subcellularLocation>
        <location evidence="4">Cytoplasm</location>
    </subcellularLocation>
</comment>
<comment type="disruption phenotype">
    <text evidence="10">Sensitive to wortmannin; simultaneous knockout of KCS1 suppresses the effect.</text>
</comment>
<comment type="miscellaneous">
    <text evidence="5">Present with 4070 molecules/cell in log phase SD medium.</text>
</comment>
<comment type="similarity">
    <text evidence="14">Belongs to the protein-tyrosine phosphatase family. Atypical dual-specificity phosphatase Siw14-like subfamily.</text>
</comment>
<name>SIW14_YEAST</name>
<keyword id="KW-0002">3D-structure</keyword>
<keyword id="KW-0963">Cytoplasm</keyword>
<keyword id="KW-0378">Hydrolase</keyword>
<keyword id="KW-0597">Phosphoprotein</keyword>
<keyword id="KW-1185">Reference proteome</keyword>
<organism>
    <name type="scientific">Saccharomyces cerevisiae (strain ATCC 204508 / S288c)</name>
    <name type="common">Baker's yeast</name>
    <dbReference type="NCBI Taxonomy" id="559292"/>
    <lineage>
        <taxon>Eukaryota</taxon>
        <taxon>Fungi</taxon>
        <taxon>Dikarya</taxon>
        <taxon>Ascomycota</taxon>
        <taxon>Saccharomycotina</taxon>
        <taxon>Saccharomycetes</taxon>
        <taxon>Saccharomycetales</taxon>
        <taxon>Saccharomycetaceae</taxon>
        <taxon>Saccharomyces</taxon>
    </lineage>
</organism>
<proteinExistence type="evidence at protein level"/>
<feature type="chain" id="PRO_0000094922" description="Inositol diphosphatase SIW14">
    <location>
        <begin position="1"/>
        <end position="281"/>
    </location>
</feature>
<feature type="domain" description="Tyrosine-protein phosphatase" evidence="2">
    <location>
        <begin position="121"/>
        <end position="271"/>
    </location>
</feature>
<feature type="region of interest" description="Disordered" evidence="3">
    <location>
        <begin position="1"/>
        <end position="20"/>
    </location>
</feature>
<feature type="compositionally biased region" description="Basic and acidic residues" evidence="3">
    <location>
        <begin position="7"/>
        <end position="20"/>
    </location>
</feature>
<feature type="active site" description="Phosphocysteine intermediate" evidence="2 15">
    <location>
        <position position="214"/>
    </location>
</feature>
<feature type="binding site" evidence="1">
    <location>
        <position position="189"/>
    </location>
    <ligand>
        <name>1D-myo-inositol hexakisphosphate</name>
        <dbReference type="ChEBI" id="CHEBI:58130"/>
    </ligand>
</feature>
<feature type="binding site" evidence="1">
    <location>
        <position position="190"/>
    </location>
    <ligand>
        <name>1D-myo-inositol hexakisphosphate</name>
        <dbReference type="ChEBI" id="CHEBI:58130"/>
    </ligand>
</feature>
<feature type="binding site" evidence="1">
    <location>
        <position position="193"/>
    </location>
    <ligand>
        <name>1D-myo-inositol hexakisphosphate</name>
        <dbReference type="ChEBI" id="CHEBI:58130"/>
    </ligand>
</feature>
<feature type="site" description="Transition state stabilizer" evidence="15">
    <location>
        <position position="220"/>
    </location>
</feature>
<feature type="modified residue" description="Phosphoserine" evidence="19 20">
    <location>
        <position position="94"/>
    </location>
</feature>
<feature type="mutagenesis site" description="Abolishes catalytic activity. Sensitive to wortmannin." evidence="7 9 10">
    <original>C</original>
    <variation>S</variation>
    <location>
        <position position="214"/>
    </location>
</feature>
<feature type="mutagenesis site" description="Abolishes catalytic activity." evidence="9">
    <original>R</original>
    <variation>A</variation>
    <location>
        <position position="220"/>
    </location>
</feature>
<feature type="strand" evidence="21">
    <location>
        <begin position="123"/>
        <end position="126"/>
    </location>
</feature>
<feature type="strand" evidence="21">
    <location>
        <begin position="129"/>
        <end position="133"/>
    </location>
</feature>
<feature type="helix" evidence="21">
    <location>
        <begin position="137"/>
        <end position="139"/>
    </location>
</feature>
<feature type="helix" evidence="21">
    <location>
        <begin position="140"/>
        <end position="145"/>
    </location>
</feature>
<feature type="strand" evidence="21">
    <location>
        <begin position="150"/>
        <end position="154"/>
    </location>
</feature>
<feature type="strand" evidence="21">
    <location>
        <begin position="156"/>
        <end position="158"/>
    </location>
</feature>
<feature type="helix" evidence="21">
    <location>
        <begin position="162"/>
        <end position="171"/>
    </location>
</feature>
<feature type="strand" evidence="21">
    <location>
        <begin position="174"/>
        <end position="177"/>
    </location>
</feature>
<feature type="strand" evidence="22">
    <location>
        <begin position="182"/>
        <end position="187"/>
    </location>
</feature>
<feature type="helix" evidence="21">
    <location>
        <begin position="192"/>
        <end position="203"/>
    </location>
</feature>
<feature type="helix" evidence="21">
    <location>
        <begin position="205"/>
        <end position="207"/>
    </location>
</feature>
<feature type="strand" evidence="21">
    <location>
        <begin position="209"/>
        <end position="213"/>
    </location>
</feature>
<feature type="strand" evidence="21">
    <location>
        <begin position="215"/>
        <end position="219"/>
    </location>
</feature>
<feature type="helix" evidence="21">
    <location>
        <begin position="220"/>
        <end position="231"/>
    </location>
</feature>
<feature type="helix" evidence="21">
    <location>
        <begin position="236"/>
        <end position="247"/>
    </location>
</feature>
<feature type="helix" evidence="21">
    <location>
        <begin position="253"/>
        <end position="261"/>
    </location>
</feature>
<feature type="helix" evidence="21">
    <location>
        <begin position="265"/>
        <end position="274"/>
    </location>
</feature>
<sequence length="281" mass="32755">MGLYQAKNDEGSDPKSSSKIDDLIENEAEIIRLIKEDGKLLIDNGDGRDIHNIIQEDKLLSVEFNEVLKRFHGEEKSDIPRKEFDEDEDDGYDSNEHHQKTIEVMNTLNHVINKEVIPPENFSHVVGEIYRSSFPRQENFSFLHERLKLKSILVLIPEEYPQENLNFLKLTGIKLYQVGMSGNKEPFVNIPSHLLTKALEIVLNPANQPILIHCNRGKHRTGCLIGCIRKLQNWSLTMIFDEYRRFAFPKARALDQQFIEMYDDDEIKRIASKNNWLPLQW</sequence>
<protein>
    <recommendedName>
        <fullName evidence="13">Inositol diphosphatase SIW14</fullName>
        <ecNumber evidence="7 9 10">3.6.1.52</ecNumber>
    </recommendedName>
    <alternativeName>
        <fullName evidence="12">5-PP-InsP phosphatase</fullName>
    </alternativeName>
    <alternativeName>
        <fullName evidence="11">Inositol pyrophosphate phosphatase SIW14</fullName>
    </alternativeName>
    <alternativeName>
        <fullName>Oxidant-induced cell-cycle arrest protein 3</fullName>
    </alternativeName>
    <alternativeName>
        <fullName>Synthetic interaction with WHI2 protein 14</fullName>
    </alternativeName>
</protein>
<accession>P53965</accession>
<accession>D6W1E7</accession>